<reference key="1">
    <citation type="journal article" date="2008" name="J. Bacteriol.">
        <title>The complete genome sequence of Escherichia coli DH10B: insights into the biology of a laboratory workhorse.</title>
        <authorList>
            <person name="Durfee T."/>
            <person name="Nelson R."/>
            <person name="Baldwin S."/>
            <person name="Plunkett G. III"/>
            <person name="Burland V."/>
            <person name="Mau B."/>
            <person name="Petrosino J.F."/>
            <person name="Qin X."/>
            <person name="Muzny D.M."/>
            <person name="Ayele M."/>
            <person name="Gibbs R.A."/>
            <person name="Csorgo B."/>
            <person name="Posfai G."/>
            <person name="Weinstock G.M."/>
            <person name="Blattner F.R."/>
        </authorList>
    </citation>
    <scope>NUCLEOTIDE SEQUENCE [LARGE SCALE GENOMIC DNA]</scope>
    <source>
        <strain>K12 / DH10B</strain>
    </source>
</reference>
<feature type="chain" id="PRO_1000136403" description="Cytoplasmic trehalase">
    <location>
        <begin position="1"/>
        <end position="549"/>
    </location>
</feature>
<feature type="active site" description="Proton donor/acceptor" evidence="1">
    <location>
        <position position="326"/>
    </location>
</feature>
<feature type="active site" description="Proton donor/acceptor" evidence="1">
    <location>
        <position position="509"/>
    </location>
</feature>
<feature type="binding site" evidence="1">
    <location>
        <position position="168"/>
    </location>
    <ligand>
        <name>substrate</name>
    </ligand>
</feature>
<feature type="binding site" evidence="1">
    <location>
        <begin position="175"/>
        <end position="176"/>
    </location>
    <ligand>
        <name>substrate</name>
    </ligand>
</feature>
<feature type="binding site" evidence="1">
    <location>
        <position position="212"/>
    </location>
    <ligand>
        <name>substrate</name>
    </ligand>
</feature>
<feature type="binding site" evidence="1">
    <location>
        <begin position="221"/>
        <end position="223"/>
    </location>
    <ligand>
        <name>substrate</name>
    </ligand>
</feature>
<feature type="binding site" evidence="1">
    <location>
        <begin position="292"/>
        <end position="294"/>
    </location>
    <ligand>
        <name>substrate</name>
    </ligand>
</feature>
<feature type="binding site" evidence="1">
    <location>
        <position position="324"/>
    </location>
    <ligand>
        <name>substrate</name>
    </ligand>
</feature>
<feature type="binding site" evidence="1">
    <location>
        <position position="525"/>
    </location>
    <ligand>
        <name>substrate</name>
    </ligand>
</feature>
<gene>
    <name evidence="1" type="primary">treF</name>
    <name type="ordered locus">ECDH10B_3696</name>
</gene>
<organism>
    <name type="scientific">Escherichia coli (strain K12 / DH10B)</name>
    <dbReference type="NCBI Taxonomy" id="316385"/>
    <lineage>
        <taxon>Bacteria</taxon>
        <taxon>Pseudomonadati</taxon>
        <taxon>Pseudomonadota</taxon>
        <taxon>Gammaproteobacteria</taxon>
        <taxon>Enterobacterales</taxon>
        <taxon>Enterobacteriaceae</taxon>
        <taxon>Escherichia</taxon>
    </lineage>
</organism>
<protein>
    <recommendedName>
        <fullName evidence="1">Cytoplasmic trehalase</fullName>
        <ecNumber evidence="1">3.2.1.28</ecNumber>
    </recommendedName>
    <alternativeName>
        <fullName evidence="1">Alpha,alpha-trehalase</fullName>
    </alternativeName>
    <alternativeName>
        <fullName evidence="1">Alpha,alpha-trehalose glucohydrolase</fullName>
    </alternativeName>
</protein>
<evidence type="ECO:0000255" key="1">
    <source>
        <dbReference type="HAMAP-Rule" id="MF_01059"/>
    </source>
</evidence>
<keyword id="KW-0963">Cytoplasm</keyword>
<keyword id="KW-0326">Glycosidase</keyword>
<keyword id="KW-0378">Hydrolase</keyword>
<accession>B1X7X4</accession>
<name>TREF_ECODH</name>
<comment type="function">
    <text evidence="1">Hydrolyzes trehalose to glucose. Could be involved, in cells returning to low osmolarity conditions, in the utilization of the accumulated cytoplasmic trehalose, which was synthesized in response to high osmolarity.</text>
</comment>
<comment type="catalytic activity">
    <reaction evidence="1">
        <text>alpha,alpha-trehalose + H2O = alpha-D-glucose + beta-D-glucose</text>
        <dbReference type="Rhea" id="RHEA:32675"/>
        <dbReference type="ChEBI" id="CHEBI:15377"/>
        <dbReference type="ChEBI" id="CHEBI:15903"/>
        <dbReference type="ChEBI" id="CHEBI:16551"/>
        <dbReference type="ChEBI" id="CHEBI:17925"/>
        <dbReference type="EC" id="3.2.1.28"/>
    </reaction>
</comment>
<comment type="pathway">
    <text evidence="1">Glycan degradation; trehalose degradation; D-glucose from alpha,alpha-trehalose: step 1/1.</text>
</comment>
<comment type="subunit">
    <text evidence="1">Monomer.</text>
</comment>
<comment type="subcellular location">
    <subcellularLocation>
        <location evidence="1">Cytoplasm</location>
    </subcellularLocation>
</comment>
<comment type="similarity">
    <text evidence="1">Belongs to the glycosyl hydrolase 37 family.</text>
</comment>
<proteinExistence type="inferred from homology"/>
<dbReference type="EC" id="3.2.1.28" evidence="1"/>
<dbReference type="EMBL" id="CP000948">
    <property type="protein sequence ID" value="ACB04572.1"/>
    <property type="molecule type" value="Genomic_DNA"/>
</dbReference>
<dbReference type="RefSeq" id="WP_000934216.1">
    <property type="nucleotide sequence ID" value="NC_010473.1"/>
</dbReference>
<dbReference type="SMR" id="B1X7X4"/>
<dbReference type="CAZy" id="GH37">
    <property type="family name" value="Glycoside Hydrolase Family 37"/>
</dbReference>
<dbReference type="KEGG" id="ecd:ECDH10B_3696"/>
<dbReference type="HOGENOM" id="CLU_006451_3_1_6"/>
<dbReference type="UniPathway" id="UPA00300">
    <property type="reaction ID" value="UER00535"/>
</dbReference>
<dbReference type="GO" id="GO:0005737">
    <property type="term" value="C:cytoplasm"/>
    <property type="evidence" value="ECO:0007669"/>
    <property type="project" value="UniProtKB-SubCell"/>
</dbReference>
<dbReference type="GO" id="GO:0004555">
    <property type="term" value="F:alpha,alpha-trehalase activity"/>
    <property type="evidence" value="ECO:0007669"/>
    <property type="project" value="UniProtKB-UniRule"/>
</dbReference>
<dbReference type="GO" id="GO:0071474">
    <property type="term" value="P:cellular hyperosmotic response"/>
    <property type="evidence" value="ECO:0007669"/>
    <property type="project" value="InterPro"/>
</dbReference>
<dbReference type="GO" id="GO:0005993">
    <property type="term" value="P:trehalose catabolic process"/>
    <property type="evidence" value="ECO:0007669"/>
    <property type="project" value="UniProtKB-UniRule"/>
</dbReference>
<dbReference type="FunFam" id="1.50.10.10:FF:000003">
    <property type="entry name" value="Cytoplasmic trehalase"/>
    <property type="match status" value="1"/>
</dbReference>
<dbReference type="Gene3D" id="1.50.10.10">
    <property type="match status" value="1"/>
</dbReference>
<dbReference type="HAMAP" id="MF_01059">
    <property type="entry name" value="Cyt_trehalase"/>
    <property type="match status" value="1"/>
</dbReference>
<dbReference type="InterPro" id="IPR008928">
    <property type="entry name" value="6-hairpin_glycosidase_sf"/>
</dbReference>
<dbReference type="InterPro" id="IPR012341">
    <property type="entry name" value="6hp_glycosidase-like_sf"/>
</dbReference>
<dbReference type="InterPro" id="IPR023715">
    <property type="entry name" value="Cyt_trehalase"/>
</dbReference>
<dbReference type="InterPro" id="IPR001661">
    <property type="entry name" value="Glyco_hydro_37"/>
</dbReference>
<dbReference type="InterPro" id="IPR018232">
    <property type="entry name" value="Glyco_hydro_37_CS"/>
</dbReference>
<dbReference type="NCBIfam" id="NF009773">
    <property type="entry name" value="PRK13270.1"/>
    <property type="match status" value="1"/>
</dbReference>
<dbReference type="NCBIfam" id="NF009774">
    <property type="entry name" value="PRK13271.1"/>
    <property type="match status" value="1"/>
</dbReference>
<dbReference type="PANTHER" id="PTHR23403:SF8">
    <property type="entry name" value="CYTOPLASMIC TREHALASE"/>
    <property type="match status" value="1"/>
</dbReference>
<dbReference type="PANTHER" id="PTHR23403">
    <property type="entry name" value="TREHALASE"/>
    <property type="match status" value="1"/>
</dbReference>
<dbReference type="Pfam" id="PF01204">
    <property type="entry name" value="Trehalase"/>
    <property type="match status" value="1"/>
</dbReference>
<dbReference type="PRINTS" id="PR00744">
    <property type="entry name" value="GLHYDRLASE37"/>
</dbReference>
<dbReference type="SUPFAM" id="SSF48208">
    <property type="entry name" value="Six-hairpin glycosidases"/>
    <property type="match status" value="1"/>
</dbReference>
<dbReference type="PROSITE" id="PS00927">
    <property type="entry name" value="TREHALASE_1"/>
    <property type="match status" value="1"/>
</dbReference>
<dbReference type="PROSITE" id="PS00928">
    <property type="entry name" value="TREHALASE_2"/>
    <property type="match status" value="1"/>
</dbReference>
<sequence length="549" mass="63697">MLNQKIQNPNPDELMIEVDLCYELDPYELKLDEMIEAEPEPEMIEGLPASDALTPADRYLELFEHVQSAKIFPDSKTFPDCAPKMDPLDILIRYRKVRRHRDFDLRKFVENHFWLPEVYSSEYVSDPQNSLKEHIDQLWPVLTREPQDHIPWSSLLALPQSYIVPGGRFSETYYWDSYFTMLGLAESGREDLLKCMADNFAWMIENYGHIPNGNRTYYLSRSQPPVFALMVELFEEDGVRGARRYLDHLKMEYAFWMDGAESLIPNQAYRHVVRMPDGSLLNRYWDDRDTPRDESWLEDVETAKHSGRPPNEVYRDLRAGAASGWDYSSRWLRDTGRLASIRTTQFIPIDLNAFLFKLESAIANISALKGEKETEALFRQKASARRDAVNRYLWDDENGIYRDYDWRREQLALFSAAAIVPLYVGMANHEQADRLANAVRSRLLTPGGILASEYETGEQWDKPNGWAPLQWMAIQGFKMYGDDLLGDEIARSWLKTVNQFYLEQHKLIEKYHIADGVPREGGGGEYPLQDGFGWTNGVVRRLIGLYGEP</sequence>